<sequence>MCDILLNVLNIVFIGIAIILVIIC</sequence>
<name>YAHV_ECOLI</name>
<dbReference type="EMBL" id="U00096">
    <property type="protein sequence ID" value="AYC08175.1"/>
    <property type="molecule type" value="Genomic_DNA"/>
</dbReference>
<dbReference type="EnsemblBacteria" id="AYC08175">
    <property type="protein sequence ID" value="AYC08175"/>
    <property type="gene ID" value="b4730"/>
</dbReference>
<dbReference type="InParanoid" id="P0DPN0"/>
<dbReference type="BioCyc" id="EcoCyc:MONOMER0-4407"/>
<dbReference type="PRO" id="PR:P0DPN0"/>
<dbReference type="Proteomes" id="UP000000625">
    <property type="component" value="Chromosome"/>
</dbReference>
<dbReference type="GO" id="GO:0005886">
    <property type="term" value="C:plasma membrane"/>
    <property type="evidence" value="ECO:0007669"/>
    <property type="project" value="UniProtKB-SubCell"/>
</dbReference>
<protein>
    <recommendedName>
        <fullName evidence="3">Protein YahV</fullName>
    </recommendedName>
</protein>
<reference key="1">
    <citation type="journal article" date="1997" name="Science">
        <title>The complete genome sequence of Escherichia coli K-12.</title>
        <authorList>
            <person name="Blattner F.R."/>
            <person name="Plunkett G. III"/>
            <person name="Bloch C.A."/>
            <person name="Perna N.T."/>
            <person name="Burland V."/>
            <person name="Riley M."/>
            <person name="Collado-Vides J."/>
            <person name="Glasner J.D."/>
            <person name="Rode C.K."/>
            <person name="Mayhew G.F."/>
            <person name="Gregor J."/>
            <person name="Davis N.W."/>
            <person name="Kirkpatrick H.A."/>
            <person name="Goeden M.A."/>
            <person name="Rose D.J."/>
            <person name="Mau B."/>
            <person name="Shao Y."/>
        </authorList>
    </citation>
    <scope>NUCLEOTIDE SEQUENCE [LARGE SCALE GENOMIC DNA]</scope>
    <source>
        <strain>K12 / MG1655 / ATCC 47076</strain>
    </source>
</reference>
<reference key="2">
    <citation type="journal article" date="2018" name="Proteomics">
        <title>Identifying new small proteins in Escherichia coli.</title>
        <authorList>
            <person name="VanOrsdel C.E."/>
            <person name="Kelly J.P."/>
            <person name="Burke B.N."/>
            <person name="Lein C.D."/>
            <person name="Oufiero C.E."/>
            <person name="Sanchez J.F."/>
            <person name="Wimmers L.E."/>
            <person name="Hearn D.J."/>
            <person name="Abuikhdair F.J."/>
            <person name="Barnhart K.R."/>
            <person name="Duley M.L."/>
            <person name="Ernst S.E.G."/>
            <person name="Kenerson B.A."/>
            <person name="Serafin A.J."/>
            <person name="Hemm M.R."/>
        </authorList>
    </citation>
    <scope>IDENTIFICATION</scope>
    <scope>INDUCTION</scope>
</reference>
<organism>
    <name type="scientific">Escherichia coli (strain K12)</name>
    <dbReference type="NCBI Taxonomy" id="83333"/>
    <lineage>
        <taxon>Bacteria</taxon>
        <taxon>Pseudomonadati</taxon>
        <taxon>Pseudomonadota</taxon>
        <taxon>Gammaproteobacteria</taxon>
        <taxon>Enterobacterales</taxon>
        <taxon>Enterobacteriaceae</taxon>
        <taxon>Escherichia</taxon>
    </lineage>
</organism>
<proteinExistence type="evidence at protein level"/>
<gene>
    <name evidence="3" type="primary">yahV</name>
    <name type="ordered locus">b4730</name>
</gene>
<feature type="chain" id="PRO_0000445158" description="Protein YahV">
    <location>
        <begin position="1"/>
        <end position="24"/>
    </location>
</feature>
<feature type="transmembrane region" description="Helical" evidence="1">
    <location>
        <begin position="4"/>
        <end position="24"/>
    </location>
</feature>
<accession>P0DPN0</accession>
<accession>A0A385XJA5</accession>
<keyword id="KW-0997">Cell inner membrane</keyword>
<keyword id="KW-1003">Cell membrane</keyword>
<keyword id="KW-0472">Membrane</keyword>
<keyword id="KW-1185">Reference proteome</keyword>
<keyword id="KW-0812">Transmembrane</keyword>
<keyword id="KW-1133">Transmembrane helix</keyword>
<evidence type="ECO:0000255" key="1"/>
<evidence type="ECO:0000269" key="2">
    <source>
    </source>
</evidence>
<evidence type="ECO:0000303" key="3">
    <source>
    </source>
</evidence>
<evidence type="ECO:0000305" key="4"/>
<comment type="subcellular location">
    <subcellularLocation>
        <location evidence="4">Cell inner membrane</location>
        <topology evidence="1">Single-pass membrane protein</topology>
    </subcellularLocation>
</comment>
<comment type="induction">
    <text evidence="2">Expressed in both exponential and stationary phase; expression is slightly higher in exponential phase (at protein level).</text>
</comment>